<dbReference type="EC" id="2.4.2.43" evidence="1"/>
<dbReference type="EMBL" id="CP000857">
    <property type="protein sequence ID" value="ACN45571.1"/>
    <property type="molecule type" value="Genomic_DNA"/>
</dbReference>
<dbReference type="RefSeq" id="WP_000978045.1">
    <property type="nucleotide sequence ID" value="NC_012125.1"/>
</dbReference>
<dbReference type="SMR" id="C0Q067"/>
<dbReference type="CAZy" id="GT83">
    <property type="family name" value="Glycosyltransferase Family 83"/>
</dbReference>
<dbReference type="KEGG" id="sei:SPC_1410"/>
<dbReference type="HOGENOM" id="CLU_019200_2_1_6"/>
<dbReference type="UniPathway" id="UPA00037"/>
<dbReference type="Proteomes" id="UP000001599">
    <property type="component" value="Chromosome"/>
</dbReference>
<dbReference type="GO" id="GO:0005886">
    <property type="term" value="C:plasma membrane"/>
    <property type="evidence" value="ECO:0007669"/>
    <property type="project" value="UniProtKB-SubCell"/>
</dbReference>
<dbReference type="GO" id="GO:0103015">
    <property type="term" value="F:4-amino-4-deoxy-L-arabinose transferase activity"/>
    <property type="evidence" value="ECO:0007669"/>
    <property type="project" value="UniProtKB-EC"/>
</dbReference>
<dbReference type="GO" id="GO:0000030">
    <property type="term" value="F:mannosyltransferase activity"/>
    <property type="evidence" value="ECO:0007669"/>
    <property type="project" value="InterPro"/>
</dbReference>
<dbReference type="GO" id="GO:0009245">
    <property type="term" value="P:lipid A biosynthetic process"/>
    <property type="evidence" value="ECO:0007669"/>
    <property type="project" value="UniProtKB-UniRule"/>
</dbReference>
<dbReference type="GO" id="GO:0009103">
    <property type="term" value="P:lipopolysaccharide biosynthetic process"/>
    <property type="evidence" value="ECO:0007669"/>
    <property type="project" value="UniProtKB-KW"/>
</dbReference>
<dbReference type="GO" id="GO:0006493">
    <property type="term" value="P:protein O-linked glycosylation"/>
    <property type="evidence" value="ECO:0007669"/>
    <property type="project" value="InterPro"/>
</dbReference>
<dbReference type="GO" id="GO:0010041">
    <property type="term" value="P:response to iron(III) ion"/>
    <property type="evidence" value="ECO:0007669"/>
    <property type="project" value="TreeGrafter"/>
</dbReference>
<dbReference type="HAMAP" id="MF_01165">
    <property type="entry name" value="ArnT_transfer"/>
    <property type="match status" value="1"/>
</dbReference>
<dbReference type="InterPro" id="IPR022839">
    <property type="entry name" value="ArnT_tfrase"/>
</dbReference>
<dbReference type="InterPro" id="IPR003342">
    <property type="entry name" value="Glyco_trans_39/83"/>
</dbReference>
<dbReference type="InterPro" id="IPR050297">
    <property type="entry name" value="LipidA_mod_glycosyltrf_83"/>
</dbReference>
<dbReference type="NCBIfam" id="NF009784">
    <property type="entry name" value="PRK13279.1"/>
    <property type="match status" value="1"/>
</dbReference>
<dbReference type="PANTHER" id="PTHR33908">
    <property type="entry name" value="MANNOSYLTRANSFERASE YKCB-RELATED"/>
    <property type="match status" value="1"/>
</dbReference>
<dbReference type="PANTHER" id="PTHR33908:SF3">
    <property type="entry name" value="UNDECAPRENYL PHOSPHATE-ALPHA-4-AMINO-4-DEOXY-L-ARABINOSE ARABINOSYL TRANSFERASE"/>
    <property type="match status" value="1"/>
</dbReference>
<dbReference type="Pfam" id="PF02366">
    <property type="entry name" value="PMT"/>
    <property type="match status" value="1"/>
</dbReference>
<comment type="function">
    <text evidence="1">Catalyzes the transfer of the L-Ara4N moiety of the glycolipid undecaprenyl phosphate-alpha-L-Ara4N to lipid A. The modified arabinose is attached to lipid A and is required for resistance to polymyxin and cationic antimicrobial peptides.</text>
</comment>
<comment type="catalytic activity">
    <reaction evidence="1">
        <text>4-amino-4-deoxy-alpha-L-arabinopyranosyl di-trans,octa-cis-undecaprenyl phosphate + lipid IVA = lipid IIA + di-trans,octa-cis-undecaprenyl phosphate.</text>
        <dbReference type="EC" id="2.4.2.43"/>
    </reaction>
</comment>
<comment type="pathway">
    <text evidence="1">Lipopolysaccharide metabolism; 4-amino-4-deoxy-beta-L-arabinose-lipid A biosynthesis.</text>
</comment>
<comment type="subcellular location">
    <subcellularLocation>
        <location evidence="1">Cell inner membrane</location>
        <topology evidence="1">Multi-pass membrane protein</topology>
    </subcellularLocation>
</comment>
<comment type="similarity">
    <text evidence="1">Belongs to the glycosyltransferase 83 family.</text>
</comment>
<gene>
    <name evidence="1" type="primary">arnT</name>
    <name type="ordered locus">SPC_1410</name>
</gene>
<name>ARNT_SALPC</name>
<proteinExistence type="inferred from homology"/>
<evidence type="ECO:0000255" key="1">
    <source>
        <dbReference type="HAMAP-Rule" id="MF_01165"/>
    </source>
</evidence>
<accession>C0Q067</accession>
<feature type="chain" id="PRO_0000380032" description="Undecaprenyl phosphate-alpha-4-amino-4-deoxy-L-arabinose arabinosyl transferase">
    <location>
        <begin position="1"/>
        <end position="548"/>
    </location>
</feature>
<feature type="transmembrane region" description="Helical" evidence="1">
    <location>
        <begin position="9"/>
        <end position="29"/>
    </location>
</feature>
<feature type="transmembrane region" description="Helical" evidence="1">
    <location>
        <begin position="82"/>
        <end position="102"/>
    </location>
</feature>
<feature type="transmembrane region" description="Helical" evidence="1">
    <location>
        <begin position="114"/>
        <end position="134"/>
    </location>
</feature>
<feature type="transmembrane region" description="Helical" evidence="1">
    <location>
        <begin position="137"/>
        <end position="157"/>
    </location>
</feature>
<feature type="transmembrane region" description="Helical" evidence="1">
    <location>
        <begin position="177"/>
        <end position="197"/>
    </location>
</feature>
<feature type="transmembrane region" description="Helical" evidence="1">
    <location>
        <begin position="205"/>
        <end position="225"/>
    </location>
</feature>
<feature type="transmembrane region" description="Helical" evidence="1">
    <location>
        <begin position="256"/>
        <end position="276"/>
    </location>
</feature>
<feature type="transmembrane region" description="Helical" evidence="1">
    <location>
        <begin position="289"/>
        <end position="309"/>
    </location>
</feature>
<feature type="transmembrane region" description="Helical" evidence="1">
    <location>
        <begin position="311"/>
        <end position="331"/>
    </location>
</feature>
<feature type="transmembrane region" description="Helical" evidence="1">
    <location>
        <begin position="345"/>
        <end position="365"/>
    </location>
</feature>
<feature type="transmembrane region" description="Helical" evidence="1">
    <location>
        <begin position="381"/>
        <end position="401"/>
    </location>
</feature>
<feature type="transmembrane region" description="Helical" evidence="1">
    <location>
        <begin position="405"/>
        <end position="425"/>
    </location>
</feature>
<sequence length="548" mass="61823">MMKSIRYYLAFAAFIALYYVIPVNSRLLWQPDETRYAEISREMLASGDWIVPHFLGLRYFEKPIAGYWINSLGQWLFGATNFGVRAGAILTTLLAAALVAWLTFRLWRDKRTALLASVIFLSLFAVYSIGTYAVLDPMIALWLTAGMCCFWQGMQATTRTGKIGMFLLLGATCGLGVLTKGFLALAVPVVSVLPWVIVQKRWKDFLLYGWLAVLSCFVVVLPWAIAIARREADFWHYFFWVEHIQRFAMSDAQHKAPFWYYLPVLLAGSLPWLGLLPGALKLGWRERNGAFYLLGWTIMPLLFFSIAKGKLPTYVLSCFAPIAILMARFVLHNVKEGIAALRVNGGINLVFGLVGIVTAFVVSSWGPLKSPVWTHIETYKVFCVWGVFTVWAFVGWYSLCHSQKYLLPAFCPLGLALLFGFSVPDRVMESKQPQFFVEMTQAPLASSRYILADSVGVAAGLAWSLKRDDIMLYGHAGELRYGLSYPDVQNKFVKADDFNAWLNQHRQEGIITLVLSIDKDEDISALSLPPADNVDYQGRLVLIQYRPK</sequence>
<protein>
    <recommendedName>
        <fullName evidence="1">Undecaprenyl phosphate-alpha-4-amino-4-deoxy-L-arabinose arabinosyl transferase</fullName>
        <ecNumber evidence="1">2.4.2.43</ecNumber>
    </recommendedName>
    <alternativeName>
        <fullName evidence="1">4-amino-4-deoxy-L-arabinose lipid A transferase</fullName>
    </alternativeName>
    <alternativeName>
        <fullName evidence="1">Lipid IV(A) 4-amino-4-deoxy-L-arabinosyltransferase</fullName>
    </alternativeName>
    <alternativeName>
        <fullName evidence="1">Undecaprenyl phosphate-alpha-L-Ara4N transferase</fullName>
    </alternativeName>
</protein>
<organism>
    <name type="scientific">Salmonella paratyphi C (strain RKS4594)</name>
    <dbReference type="NCBI Taxonomy" id="476213"/>
    <lineage>
        <taxon>Bacteria</taxon>
        <taxon>Pseudomonadati</taxon>
        <taxon>Pseudomonadota</taxon>
        <taxon>Gammaproteobacteria</taxon>
        <taxon>Enterobacterales</taxon>
        <taxon>Enterobacteriaceae</taxon>
        <taxon>Salmonella</taxon>
    </lineage>
</organism>
<keyword id="KW-0997">Cell inner membrane</keyword>
<keyword id="KW-1003">Cell membrane</keyword>
<keyword id="KW-0328">Glycosyltransferase</keyword>
<keyword id="KW-0441">Lipid A biosynthesis</keyword>
<keyword id="KW-0444">Lipid biosynthesis</keyword>
<keyword id="KW-0443">Lipid metabolism</keyword>
<keyword id="KW-0448">Lipopolysaccharide biosynthesis</keyword>
<keyword id="KW-0472">Membrane</keyword>
<keyword id="KW-0808">Transferase</keyword>
<keyword id="KW-0812">Transmembrane</keyword>
<keyword id="KW-1133">Transmembrane helix</keyword>
<reference key="1">
    <citation type="journal article" date="2009" name="PLoS ONE">
        <title>Salmonella paratyphi C: genetic divergence from Salmonella choleraesuis and pathogenic convergence with Salmonella typhi.</title>
        <authorList>
            <person name="Liu W.-Q."/>
            <person name="Feng Y."/>
            <person name="Wang Y."/>
            <person name="Zou Q.-H."/>
            <person name="Chen F."/>
            <person name="Guo J.-T."/>
            <person name="Peng Y.-H."/>
            <person name="Jin Y."/>
            <person name="Li Y.-G."/>
            <person name="Hu S.-N."/>
            <person name="Johnston R.N."/>
            <person name="Liu G.-R."/>
            <person name="Liu S.-L."/>
        </authorList>
    </citation>
    <scope>NUCLEOTIDE SEQUENCE [LARGE SCALE GENOMIC DNA]</scope>
    <source>
        <strain>RKS4594</strain>
    </source>
</reference>